<organism>
    <name type="scientific">Helicobacter pylori (strain Shi470)</name>
    <dbReference type="NCBI Taxonomy" id="512562"/>
    <lineage>
        <taxon>Bacteria</taxon>
        <taxon>Pseudomonadati</taxon>
        <taxon>Campylobacterota</taxon>
        <taxon>Epsilonproteobacteria</taxon>
        <taxon>Campylobacterales</taxon>
        <taxon>Helicobacteraceae</taxon>
        <taxon>Helicobacter</taxon>
    </lineage>
</organism>
<feature type="chain" id="PRO_1000145988" description="tRNA N6-adenosine threonylcarbamoyltransferase">
    <location>
        <begin position="1"/>
        <end position="340"/>
    </location>
</feature>
<feature type="binding site" evidence="1">
    <location>
        <position position="111"/>
    </location>
    <ligand>
        <name>Fe cation</name>
        <dbReference type="ChEBI" id="CHEBI:24875"/>
    </ligand>
</feature>
<feature type="binding site" evidence="1">
    <location>
        <position position="115"/>
    </location>
    <ligand>
        <name>Fe cation</name>
        <dbReference type="ChEBI" id="CHEBI:24875"/>
    </ligand>
</feature>
<feature type="binding site" evidence="1">
    <location>
        <begin position="134"/>
        <end position="138"/>
    </location>
    <ligand>
        <name>substrate</name>
    </ligand>
</feature>
<feature type="binding site" evidence="1">
    <location>
        <position position="167"/>
    </location>
    <ligand>
        <name>substrate</name>
    </ligand>
</feature>
<feature type="binding site" evidence="1">
    <location>
        <position position="180"/>
    </location>
    <ligand>
        <name>substrate</name>
    </ligand>
</feature>
<feature type="binding site" evidence="1">
    <location>
        <position position="276"/>
    </location>
    <ligand>
        <name>substrate</name>
    </ligand>
</feature>
<feature type="binding site" evidence="1">
    <location>
        <position position="304"/>
    </location>
    <ligand>
        <name>Fe cation</name>
        <dbReference type="ChEBI" id="CHEBI:24875"/>
    </ligand>
</feature>
<dbReference type="EC" id="2.3.1.234" evidence="1"/>
<dbReference type="EMBL" id="CP001072">
    <property type="protein sequence ID" value="ACD49032.1"/>
    <property type="molecule type" value="Genomic_DNA"/>
</dbReference>
<dbReference type="RefSeq" id="WP_000603699.1">
    <property type="nucleotide sequence ID" value="NC_010698.2"/>
</dbReference>
<dbReference type="SMR" id="B2UW00"/>
<dbReference type="KEGG" id="hps:HPSH_08245"/>
<dbReference type="HOGENOM" id="CLU_023208_0_3_7"/>
<dbReference type="GO" id="GO:0005737">
    <property type="term" value="C:cytoplasm"/>
    <property type="evidence" value="ECO:0007669"/>
    <property type="project" value="UniProtKB-SubCell"/>
</dbReference>
<dbReference type="GO" id="GO:0005506">
    <property type="term" value="F:iron ion binding"/>
    <property type="evidence" value="ECO:0007669"/>
    <property type="project" value="UniProtKB-UniRule"/>
</dbReference>
<dbReference type="GO" id="GO:0061711">
    <property type="term" value="F:N(6)-L-threonylcarbamoyladenine synthase activity"/>
    <property type="evidence" value="ECO:0007669"/>
    <property type="project" value="UniProtKB-EC"/>
</dbReference>
<dbReference type="GO" id="GO:0002949">
    <property type="term" value="P:tRNA threonylcarbamoyladenosine modification"/>
    <property type="evidence" value="ECO:0007669"/>
    <property type="project" value="UniProtKB-UniRule"/>
</dbReference>
<dbReference type="FunFam" id="3.30.420.40:FF:000359">
    <property type="entry name" value="tRNA N6-adenosine threonylcarbamoyltransferase"/>
    <property type="match status" value="1"/>
</dbReference>
<dbReference type="Gene3D" id="3.30.420.40">
    <property type="match status" value="2"/>
</dbReference>
<dbReference type="HAMAP" id="MF_01445">
    <property type="entry name" value="TsaD"/>
    <property type="match status" value="1"/>
</dbReference>
<dbReference type="InterPro" id="IPR043129">
    <property type="entry name" value="ATPase_NBD"/>
</dbReference>
<dbReference type="InterPro" id="IPR000905">
    <property type="entry name" value="Gcp-like_dom"/>
</dbReference>
<dbReference type="InterPro" id="IPR017861">
    <property type="entry name" value="KAE1/TsaD"/>
</dbReference>
<dbReference type="InterPro" id="IPR017860">
    <property type="entry name" value="Peptidase_M22_CS"/>
</dbReference>
<dbReference type="InterPro" id="IPR022450">
    <property type="entry name" value="TsaD"/>
</dbReference>
<dbReference type="NCBIfam" id="TIGR00329">
    <property type="entry name" value="gcp_kae1"/>
    <property type="match status" value="1"/>
</dbReference>
<dbReference type="NCBIfam" id="TIGR03723">
    <property type="entry name" value="T6A_TsaD_YgjD"/>
    <property type="match status" value="1"/>
</dbReference>
<dbReference type="PANTHER" id="PTHR11735">
    <property type="entry name" value="TRNA N6-ADENOSINE THREONYLCARBAMOYLTRANSFERASE"/>
    <property type="match status" value="1"/>
</dbReference>
<dbReference type="PANTHER" id="PTHR11735:SF6">
    <property type="entry name" value="TRNA N6-ADENOSINE THREONYLCARBAMOYLTRANSFERASE, MITOCHONDRIAL"/>
    <property type="match status" value="1"/>
</dbReference>
<dbReference type="Pfam" id="PF00814">
    <property type="entry name" value="TsaD"/>
    <property type="match status" value="1"/>
</dbReference>
<dbReference type="PRINTS" id="PR00789">
    <property type="entry name" value="OSIALOPTASE"/>
</dbReference>
<dbReference type="SUPFAM" id="SSF53067">
    <property type="entry name" value="Actin-like ATPase domain"/>
    <property type="match status" value="2"/>
</dbReference>
<dbReference type="PROSITE" id="PS01016">
    <property type="entry name" value="GLYCOPROTEASE"/>
    <property type="match status" value="1"/>
</dbReference>
<comment type="function">
    <text evidence="1">Required for the formation of a threonylcarbamoyl group on adenosine at position 37 (t(6)A37) in tRNAs that read codons beginning with adenine. Is involved in the transfer of the threonylcarbamoyl moiety of threonylcarbamoyl-AMP (TC-AMP) to the N6 group of A37, together with TsaE and TsaB. TsaD likely plays a direct catalytic role in this reaction.</text>
</comment>
<comment type="catalytic activity">
    <reaction evidence="1">
        <text>L-threonylcarbamoyladenylate + adenosine(37) in tRNA = N(6)-L-threonylcarbamoyladenosine(37) in tRNA + AMP + H(+)</text>
        <dbReference type="Rhea" id="RHEA:37059"/>
        <dbReference type="Rhea" id="RHEA-COMP:10162"/>
        <dbReference type="Rhea" id="RHEA-COMP:10163"/>
        <dbReference type="ChEBI" id="CHEBI:15378"/>
        <dbReference type="ChEBI" id="CHEBI:73682"/>
        <dbReference type="ChEBI" id="CHEBI:74411"/>
        <dbReference type="ChEBI" id="CHEBI:74418"/>
        <dbReference type="ChEBI" id="CHEBI:456215"/>
        <dbReference type="EC" id="2.3.1.234"/>
    </reaction>
</comment>
<comment type="cofactor">
    <cofactor evidence="1">
        <name>Fe(2+)</name>
        <dbReference type="ChEBI" id="CHEBI:29033"/>
    </cofactor>
    <text evidence="1">Binds 1 Fe(2+) ion per subunit.</text>
</comment>
<comment type="subcellular location">
    <subcellularLocation>
        <location evidence="1">Cytoplasm</location>
    </subcellularLocation>
</comment>
<comment type="similarity">
    <text evidence="1">Belongs to the KAE1 / TsaD family.</text>
</comment>
<keyword id="KW-0012">Acyltransferase</keyword>
<keyword id="KW-0963">Cytoplasm</keyword>
<keyword id="KW-0408">Iron</keyword>
<keyword id="KW-0479">Metal-binding</keyword>
<keyword id="KW-0808">Transferase</keyword>
<keyword id="KW-0819">tRNA processing</keyword>
<accession>B2UW00</accession>
<reference key="1">
    <citation type="submission" date="2008-05" db="EMBL/GenBank/DDBJ databases">
        <title>Genome sequence of Helicobacter pylori from the remote Amazon: traces of Asian ancestry of the first Americans.</title>
        <authorList>
            <person name="Kersulyte D."/>
            <person name="Kalia A."/>
            <person name="Gilman R.H."/>
            <person name="Berg D.E."/>
        </authorList>
    </citation>
    <scope>NUCLEOTIDE SEQUENCE [LARGE SCALE GENOMIC DNA]</scope>
    <source>
        <strain>Shi470</strain>
    </source>
</reference>
<name>TSAD_HELPS</name>
<gene>
    <name evidence="1" type="primary">tsaD</name>
    <name type="synonym">gcp</name>
    <name type="ordered locus">HPSH_08245</name>
</gene>
<sequence>MILSIESSCDDSSLALTRIKDAKLIAHFKISQEKHHSSYGGVVPELASRLHAENLPLLLERIKISLNKDFSKIKAIAITNQPGLSVTLIEGLMMAKALSLSLNLPLILEDHLRGHVYSLFINEKQTCMPLSALLVSGGHSLILEARDYEDIKIVATSLDDSFGESFDKVSKMLDLGYPGGPIVEKLALDYAHQNEPLMFPIPLKNSQNLAFSFSGLKNAVRLEVEKNAPNLNEAIKQKISYHFQSAAIEHLIQQTKRYFKIKRPKIFGIVGGASQNLALRKAFENLCDEFDCKLVLAPLEFCNDNAAMIGRSSLEAYQQKRFVPLEKANISPRTLLKSFE</sequence>
<protein>
    <recommendedName>
        <fullName evidence="1">tRNA N6-adenosine threonylcarbamoyltransferase</fullName>
        <ecNumber evidence="1">2.3.1.234</ecNumber>
    </recommendedName>
    <alternativeName>
        <fullName evidence="1">N6-L-threonylcarbamoyladenine synthase</fullName>
        <shortName evidence="1">t(6)A synthase</shortName>
    </alternativeName>
    <alternativeName>
        <fullName evidence="1">t(6)A37 threonylcarbamoyladenosine biosynthesis protein TsaD</fullName>
    </alternativeName>
    <alternativeName>
        <fullName evidence="1">tRNA threonylcarbamoyladenosine biosynthesis protein TsaD</fullName>
    </alternativeName>
</protein>
<evidence type="ECO:0000255" key="1">
    <source>
        <dbReference type="HAMAP-Rule" id="MF_01445"/>
    </source>
</evidence>
<proteinExistence type="inferred from homology"/>